<dbReference type="EC" id="2.7.1.50" evidence="1"/>
<dbReference type="EMBL" id="CP000246">
    <property type="protein sequence ID" value="ABG83081.1"/>
    <property type="molecule type" value="Genomic_DNA"/>
</dbReference>
<dbReference type="RefSeq" id="WP_003460606.1">
    <property type="nucleotide sequence ID" value="NC_008261.1"/>
</dbReference>
<dbReference type="SMR" id="Q0TQV3"/>
<dbReference type="STRING" id="195103.CPF_1544"/>
<dbReference type="PaxDb" id="195103-CPF_1544"/>
<dbReference type="KEGG" id="cpf:CPF_1544"/>
<dbReference type="eggNOG" id="COG2145">
    <property type="taxonomic scope" value="Bacteria"/>
</dbReference>
<dbReference type="HOGENOM" id="CLU_019943_0_1_9"/>
<dbReference type="UniPathway" id="UPA00060">
    <property type="reaction ID" value="UER00139"/>
</dbReference>
<dbReference type="Proteomes" id="UP000001823">
    <property type="component" value="Chromosome"/>
</dbReference>
<dbReference type="GO" id="GO:0005524">
    <property type="term" value="F:ATP binding"/>
    <property type="evidence" value="ECO:0007669"/>
    <property type="project" value="UniProtKB-UniRule"/>
</dbReference>
<dbReference type="GO" id="GO:0004417">
    <property type="term" value="F:hydroxyethylthiazole kinase activity"/>
    <property type="evidence" value="ECO:0007669"/>
    <property type="project" value="UniProtKB-UniRule"/>
</dbReference>
<dbReference type="GO" id="GO:0000287">
    <property type="term" value="F:magnesium ion binding"/>
    <property type="evidence" value="ECO:0007669"/>
    <property type="project" value="UniProtKB-UniRule"/>
</dbReference>
<dbReference type="GO" id="GO:0009228">
    <property type="term" value="P:thiamine biosynthetic process"/>
    <property type="evidence" value="ECO:0007669"/>
    <property type="project" value="UniProtKB-KW"/>
</dbReference>
<dbReference type="GO" id="GO:0009229">
    <property type="term" value="P:thiamine diphosphate biosynthetic process"/>
    <property type="evidence" value="ECO:0007669"/>
    <property type="project" value="UniProtKB-UniRule"/>
</dbReference>
<dbReference type="CDD" id="cd01170">
    <property type="entry name" value="THZ_kinase"/>
    <property type="match status" value="1"/>
</dbReference>
<dbReference type="Gene3D" id="3.40.1190.20">
    <property type="match status" value="1"/>
</dbReference>
<dbReference type="HAMAP" id="MF_00228">
    <property type="entry name" value="Thz_kinase"/>
    <property type="match status" value="1"/>
</dbReference>
<dbReference type="InterPro" id="IPR000417">
    <property type="entry name" value="Hyethyz_kinase"/>
</dbReference>
<dbReference type="InterPro" id="IPR029056">
    <property type="entry name" value="Ribokinase-like"/>
</dbReference>
<dbReference type="NCBIfam" id="NF006830">
    <property type="entry name" value="PRK09355.1"/>
    <property type="match status" value="1"/>
</dbReference>
<dbReference type="Pfam" id="PF02110">
    <property type="entry name" value="HK"/>
    <property type="match status" value="1"/>
</dbReference>
<dbReference type="PIRSF" id="PIRSF000513">
    <property type="entry name" value="Thz_kinase"/>
    <property type="match status" value="1"/>
</dbReference>
<dbReference type="PRINTS" id="PR01099">
    <property type="entry name" value="HYETHTZKNASE"/>
</dbReference>
<dbReference type="SUPFAM" id="SSF53613">
    <property type="entry name" value="Ribokinase-like"/>
    <property type="match status" value="1"/>
</dbReference>
<proteinExistence type="inferred from homology"/>
<name>THIM_CLOP1</name>
<accession>Q0TQV3</accession>
<feature type="chain" id="PRO_1000021505" description="Hydroxyethylthiazole kinase">
    <location>
        <begin position="1"/>
        <end position="265"/>
    </location>
</feature>
<feature type="binding site" evidence="1">
    <location>
        <position position="36"/>
    </location>
    <ligand>
        <name>substrate</name>
    </ligand>
</feature>
<feature type="binding site" evidence="1">
    <location>
        <position position="112"/>
    </location>
    <ligand>
        <name>ATP</name>
        <dbReference type="ChEBI" id="CHEBI:30616"/>
    </ligand>
</feature>
<feature type="binding site" evidence="1">
    <location>
        <position position="160"/>
    </location>
    <ligand>
        <name>ATP</name>
        <dbReference type="ChEBI" id="CHEBI:30616"/>
    </ligand>
</feature>
<feature type="binding site" evidence="1">
    <location>
        <position position="187"/>
    </location>
    <ligand>
        <name>substrate</name>
    </ligand>
</feature>
<protein>
    <recommendedName>
        <fullName evidence="1">Hydroxyethylthiazole kinase</fullName>
        <ecNumber evidence="1">2.7.1.50</ecNumber>
    </recommendedName>
    <alternativeName>
        <fullName evidence="1">4-methyl-5-beta-hydroxyethylthiazole kinase</fullName>
        <shortName evidence="1">TH kinase</shortName>
        <shortName evidence="1">Thz kinase</shortName>
    </alternativeName>
</protein>
<reference key="1">
    <citation type="journal article" date="2006" name="Genome Res.">
        <title>Skewed genomic variability in strains of the toxigenic bacterial pathogen, Clostridium perfringens.</title>
        <authorList>
            <person name="Myers G.S.A."/>
            <person name="Rasko D.A."/>
            <person name="Cheung J.K."/>
            <person name="Ravel J."/>
            <person name="Seshadri R."/>
            <person name="DeBoy R.T."/>
            <person name="Ren Q."/>
            <person name="Varga J."/>
            <person name="Awad M.M."/>
            <person name="Brinkac L.M."/>
            <person name="Daugherty S.C."/>
            <person name="Haft D.H."/>
            <person name="Dodson R.J."/>
            <person name="Madupu R."/>
            <person name="Nelson W.C."/>
            <person name="Rosovitz M.J."/>
            <person name="Sullivan S.A."/>
            <person name="Khouri H."/>
            <person name="Dimitrov G.I."/>
            <person name="Watkins K.L."/>
            <person name="Mulligan S."/>
            <person name="Benton J."/>
            <person name="Radune D."/>
            <person name="Fisher D.J."/>
            <person name="Atkins H.S."/>
            <person name="Hiscox T."/>
            <person name="Jost B.H."/>
            <person name="Billington S.J."/>
            <person name="Songer J.G."/>
            <person name="McClane B.A."/>
            <person name="Titball R.W."/>
            <person name="Rood J.I."/>
            <person name="Melville S.B."/>
            <person name="Paulsen I.T."/>
        </authorList>
    </citation>
    <scope>NUCLEOTIDE SEQUENCE [LARGE SCALE GENOMIC DNA]</scope>
    <source>
        <strain>ATCC 13124 / DSM 756 / JCM 1290 / NCIMB 6125 / NCTC 8237 / S 107 / Type A</strain>
    </source>
</reference>
<gene>
    <name evidence="1" type="primary">thiM</name>
    <name type="ordered locus">CPF_1544</name>
</gene>
<sequence length="265" mass="29495">MEVLKRENPLIHMITNYVTVNDLAQVTINYGGLPLMATHHDELKEITKMANGLLVNIGTLEPYQMESSMISMKIAKEKGIPSVLDPVGVQASKLRKDFAKKLILEGEPSLIKGNLAEIKTLIGETSNSIGIDSFDDSLSENTKNKIKEYARERNLIVVVSGVVDFITNGEESASVKNGTYKMSKITGTGCMLGALLTLALSFYDHKDLRFKEVVKAVSTWGICGELAEERLREKEGLMTFKHNLLDELSIINDETIKEREKVIYD</sequence>
<keyword id="KW-0067">ATP-binding</keyword>
<keyword id="KW-0418">Kinase</keyword>
<keyword id="KW-0460">Magnesium</keyword>
<keyword id="KW-0479">Metal-binding</keyword>
<keyword id="KW-0547">Nucleotide-binding</keyword>
<keyword id="KW-0784">Thiamine biosynthesis</keyword>
<keyword id="KW-0808">Transferase</keyword>
<evidence type="ECO:0000255" key="1">
    <source>
        <dbReference type="HAMAP-Rule" id="MF_00228"/>
    </source>
</evidence>
<organism>
    <name type="scientific">Clostridium perfringens (strain ATCC 13124 / DSM 756 / JCM 1290 / NCIMB 6125 / NCTC 8237 / Type A)</name>
    <dbReference type="NCBI Taxonomy" id="195103"/>
    <lineage>
        <taxon>Bacteria</taxon>
        <taxon>Bacillati</taxon>
        <taxon>Bacillota</taxon>
        <taxon>Clostridia</taxon>
        <taxon>Eubacteriales</taxon>
        <taxon>Clostridiaceae</taxon>
        <taxon>Clostridium</taxon>
    </lineage>
</organism>
<comment type="function">
    <text evidence="1">Catalyzes the phosphorylation of the hydroxyl group of 4-methyl-5-beta-hydroxyethylthiazole (THZ).</text>
</comment>
<comment type="catalytic activity">
    <reaction evidence="1">
        <text>5-(2-hydroxyethyl)-4-methylthiazole + ATP = 4-methyl-5-(2-phosphooxyethyl)-thiazole + ADP + H(+)</text>
        <dbReference type="Rhea" id="RHEA:24212"/>
        <dbReference type="ChEBI" id="CHEBI:15378"/>
        <dbReference type="ChEBI" id="CHEBI:17957"/>
        <dbReference type="ChEBI" id="CHEBI:30616"/>
        <dbReference type="ChEBI" id="CHEBI:58296"/>
        <dbReference type="ChEBI" id="CHEBI:456216"/>
        <dbReference type="EC" id="2.7.1.50"/>
    </reaction>
</comment>
<comment type="cofactor">
    <cofactor evidence="1">
        <name>Mg(2+)</name>
        <dbReference type="ChEBI" id="CHEBI:18420"/>
    </cofactor>
</comment>
<comment type="pathway">
    <text evidence="1">Cofactor biosynthesis; thiamine diphosphate biosynthesis; 4-methyl-5-(2-phosphoethyl)-thiazole from 5-(2-hydroxyethyl)-4-methylthiazole: step 1/1.</text>
</comment>
<comment type="similarity">
    <text evidence="1">Belongs to the Thz kinase family.</text>
</comment>